<organism>
    <name type="scientific">Yersinia pestis bv. Antiqua (strain Nepal516)</name>
    <dbReference type="NCBI Taxonomy" id="377628"/>
    <lineage>
        <taxon>Bacteria</taxon>
        <taxon>Pseudomonadati</taxon>
        <taxon>Pseudomonadota</taxon>
        <taxon>Gammaproteobacteria</taxon>
        <taxon>Enterobacterales</taxon>
        <taxon>Yersiniaceae</taxon>
        <taxon>Yersinia</taxon>
    </lineage>
</organism>
<proteinExistence type="inferred from homology"/>
<keyword id="KW-0997">Cell inner membrane</keyword>
<keyword id="KW-1003">Cell membrane</keyword>
<keyword id="KW-0133">Cell shape</keyword>
<keyword id="KW-0238">DNA-binding</keyword>
<keyword id="KW-0472">Membrane</keyword>
<keyword id="KW-0735">Signal-anchor</keyword>
<keyword id="KW-0812">Transmembrane</keyword>
<keyword id="KW-1133">Transmembrane helix</keyword>
<feature type="chain" id="PRO_0000361873" description="Cytoskeleton protein RodZ">
    <location>
        <begin position="1"/>
        <end position="345"/>
    </location>
</feature>
<feature type="topological domain" description="Cytoplasmic" evidence="1">
    <location>
        <begin position="1"/>
        <end position="111"/>
    </location>
</feature>
<feature type="transmembrane region" description="Helical; Signal-anchor for type II membrane protein" evidence="1">
    <location>
        <begin position="112"/>
        <end position="132"/>
    </location>
</feature>
<feature type="topological domain" description="Periplasmic" evidence="1">
    <location>
        <begin position="133"/>
        <end position="345"/>
    </location>
</feature>
<feature type="domain" description="HTH cro/C1-type" evidence="1">
    <location>
        <begin position="19"/>
        <end position="79"/>
    </location>
</feature>
<feature type="DNA-binding region" description="H-T-H motif" evidence="1">
    <location>
        <begin position="30"/>
        <end position="49"/>
    </location>
</feature>
<feature type="region of interest" description="Disordered" evidence="2">
    <location>
        <begin position="151"/>
        <end position="259"/>
    </location>
</feature>
<feature type="compositionally biased region" description="Polar residues" evidence="2">
    <location>
        <begin position="188"/>
        <end position="225"/>
    </location>
</feature>
<feature type="compositionally biased region" description="Low complexity" evidence="2">
    <location>
        <begin position="229"/>
        <end position="241"/>
    </location>
</feature>
<gene>
    <name evidence="1" type="primary">rodZ</name>
    <name type="ordered locus">YPN_1258</name>
    <name type="ORF">YP516_1381</name>
</gene>
<protein>
    <recommendedName>
        <fullName evidence="1">Cytoskeleton protein RodZ</fullName>
    </recommendedName>
</protein>
<comment type="function">
    <text evidence="1">Cytoskeletal protein that is involved in cell-shape control through regulation of the length of the long axis.</text>
</comment>
<comment type="subcellular location">
    <subcellularLocation>
        <location evidence="1">Cell inner membrane</location>
        <topology evidence="1">Single-pass type II membrane protein</topology>
    </subcellularLocation>
    <text evidence="1">Forms helical filaments along the long axis of the cell.</text>
</comment>
<comment type="domain">
    <text evidence="1">The helix-turn-helix (HTH) motif in the cytoplasmic domain of the N-terminus is involved in the formation of spirals to maintain the rigid rod shape. As this protein is anchored in the cytoplasmic membrane, the HTH motif may contribute to protein-protein interactions to form the RodZ helix, which is localized beneath the cytoplasmic membrane. The C-terminal domain may be critical for determination of the rod shape by probably interacting with enzymes required for synthesis of the peptidoglycan layer, including PBPs in the periplasm.</text>
</comment>
<comment type="similarity">
    <text evidence="1">Belongs to the RodZ family.</text>
</comment>
<evidence type="ECO:0000255" key="1">
    <source>
        <dbReference type="HAMAP-Rule" id="MF_02017"/>
    </source>
</evidence>
<evidence type="ECO:0000256" key="2">
    <source>
        <dbReference type="SAM" id="MobiDB-lite"/>
    </source>
</evidence>
<accession>Q1CK92</accession>
<accession>C4GRL0</accession>
<reference key="1">
    <citation type="journal article" date="2006" name="J. Bacteriol.">
        <title>Complete genome sequence of Yersinia pestis strains Antiqua and Nepal516: evidence of gene reduction in an emerging pathogen.</title>
        <authorList>
            <person name="Chain P.S.G."/>
            <person name="Hu P."/>
            <person name="Malfatti S.A."/>
            <person name="Radnedge L."/>
            <person name="Larimer F."/>
            <person name="Vergez L.M."/>
            <person name="Worsham P."/>
            <person name="Chu M.C."/>
            <person name="Andersen G.L."/>
        </authorList>
    </citation>
    <scope>NUCLEOTIDE SEQUENCE [LARGE SCALE GENOMIC DNA]</scope>
    <source>
        <strain>Nepal516</strain>
    </source>
</reference>
<reference key="2">
    <citation type="submission" date="2009-04" db="EMBL/GenBank/DDBJ databases">
        <title>Yersinia pestis Nepal516A whole genome shotgun sequencing project.</title>
        <authorList>
            <person name="Plunkett G. III"/>
            <person name="Anderson B.D."/>
            <person name="Baumler D.J."/>
            <person name="Burland V."/>
            <person name="Cabot E.L."/>
            <person name="Glasner J.D."/>
            <person name="Mau B."/>
            <person name="Neeno-Eckwall E."/>
            <person name="Perna N.T."/>
            <person name="Munk A.C."/>
            <person name="Tapia R."/>
            <person name="Green L.D."/>
            <person name="Rogers Y.C."/>
            <person name="Detter J.C."/>
            <person name="Bruce D.C."/>
            <person name="Brettin T.S."/>
        </authorList>
    </citation>
    <scope>NUCLEOTIDE SEQUENCE [LARGE SCALE GENOMIC DNA]</scope>
    <source>
        <strain>Nepal516</strain>
    </source>
</reference>
<sequence length="345" mass="36440">MNTEASQDQTVTETPGVRLRQARESLGLTQQTVAERLCLKVSTIRDIEEDNAQANLASTFHRGYIRSYAKLVHLPEDELLPILEKQAPVRAAKVAPMQSFSLGKKHKKRDGWLMSFTWLIVLVVLGLTGAWWWQNHQAQQAEIANMVDQSSAQLSQNGGQPVPLTDDNSDAIAPTDAPAPVANGQPVPLTNHSGSAITNSATTSSVPKTTSTEPVDTANTNTTMHQEGAASAAVSPSQVPQPGMPTGQPPLPTADAGVSGSASSVGALVMNFTADCWLQVVDATGKTLFSGIQKGGAVLNLAGKAPYKLTIGAPGALTISYQGNPVDLSKFIKANRVARLTVCVE</sequence>
<name>RODZ_YERPN</name>
<dbReference type="EMBL" id="CP000305">
    <property type="protein sequence ID" value="ABG17588.1"/>
    <property type="molecule type" value="Genomic_DNA"/>
</dbReference>
<dbReference type="EMBL" id="ACNQ01000008">
    <property type="protein sequence ID" value="EEO77701.1"/>
    <property type="molecule type" value="Genomic_DNA"/>
</dbReference>
<dbReference type="RefSeq" id="WP_002209818.1">
    <property type="nucleotide sequence ID" value="NZ_ACNQ01000008.1"/>
</dbReference>
<dbReference type="SMR" id="Q1CK92"/>
<dbReference type="GeneID" id="57975838"/>
<dbReference type="KEGG" id="ypn:YPN_1258"/>
<dbReference type="HOGENOM" id="CLU_047530_3_1_6"/>
<dbReference type="Proteomes" id="UP000008936">
    <property type="component" value="Chromosome"/>
</dbReference>
<dbReference type="GO" id="GO:0005886">
    <property type="term" value="C:plasma membrane"/>
    <property type="evidence" value="ECO:0007669"/>
    <property type="project" value="UniProtKB-SubCell"/>
</dbReference>
<dbReference type="GO" id="GO:0003677">
    <property type="term" value="F:DNA binding"/>
    <property type="evidence" value="ECO:0007669"/>
    <property type="project" value="UniProtKB-KW"/>
</dbReference>
<dbReference type="GO" id="GO:0008360">
    <property type="term" value="P:regulation of cell shape"/>
    <property type="evidence" value="ECO:0007669"/>
    <property type="project" value="UniProtKB-UniRule"/>
</dbReference>
<dbReference type="CDD" id="cd00093">
    <property type="entry name" value="HTH_XRE"/>
    <property type="match status" value="1"/>
</dbReference>
<dbReference type="Gene3D" id="1.10.260.40">
    <property type="entry name" value="lambda repressor-like DNA-binding domains"/>
    <property type="match status" value="1"/>
</dbReference>
<dbReference type="HAMAP" id="MF_02017">
    <property type="entry name" value="RodZ"/>
    <property type="match status" value="1"/>
</dbReference>
<dbReference type="InterPro" id="IPR050400">
    <property type="entry name" value="Bact_Cytoskel_RodZ"/>
</dbReference>
<dbReference type="InterPro" id="IPR001387">
    <property type="entry name" value="Cro/C1-type_HTH"/>
</dbReference>
<dbReference type="InterPro" id="IPR010982">
    <property type="entry name" value="Lambda_DNA-bd_dom_sf"/>
</dbReference>
<dbReference type="InterPro" id="IPR023690">
    <property type="entry name" value="RodZ"/>
</dbReference>
<dbReference type="InterPro" id="IPR025194">
    <property type="entry name" value="RodZ-like_C"/>
</dbReference>
<dbReference type="NCBIfam" id="NF008109">
    <property type="entry name" value="PRK10856.1"/>
    <property type="match status" value="1"/>
</dbReference>
<dbReference type="PANTHER" id="PTHR34475">
    <property type="match status" value="1"/>
</dbReference>
<dbReference type="PANTHER" id="PTHR34475:SF1">
    <property type="entry name" value="CYTOSKELETON PROTEIN RODZ"/>
    <property type="match status" value="1"/>
</dbReference>
<dbReference type="Pfam" id="PF13413">
    <property type="entry name" value="HTH_25"/>
    <property type="match status" value="1"/>
</dbReference>
<dbReference type="Pfam" id="PF13464">
    <property type="entry name" value="RodZ_C"/>
    <property type="match status" value="1"/>
</dbReference>
<dbReference type="SMART" id="SM00530">
    <property type="entry name" value="HTH_XRE"/>
    <property type="match status" value="1"/>
</dbReference>
<dbReference type="SUPFAM" id="SSF47413">
    <property type="entry name" value="lambda repressor-like DNA-binding domains"/>
    <property type="match status" value="1"/>
</dbReference>
<dbReference type="PROSITE" id="PS50943">
    <property type="entry name" value="HTH_CROC1"/>
    <property type="match status" value="1"/>
</dbReference>